<proteinExistence type="inferred from homology"/>
<dbReference type="EMBL" id="CH981526">
    <property type="protein sequence ID" value="EDK44366.1"/>
    <property type="molecule type" value="Genomic_DNA"/>
</dbReference>
<dbReference type="RefSeq" id="XP_001525987.1">
    <property type="nucleotide sequence ID" value="XM_001525937.1"/>
</dbReference>
<dbReference type="SMR" id="A5DYV8"/>
<dbReference type="FunCoup" id="A5DYV8">
    <property type="interactions" value="775"/>
</dbReference>
<dbReference type="STRING" id="379508.A5DYV8"/>
<dbReference type="GeneID" id="5232975"/>
<dbReference type="KEGG" id="lel:PVL30_003381"/>
<dbReference type="VEuPathDB" id="FungiDB:LELG_02545"/>
<dbReference type="eggNOG" id="KOG0218">
    <property type="taxonomic scope" value="Eukaryota"/>
</dbReference>
<dbReference type="HOGENOM" id="CLU_002472_3_1_1"/>
<dbReference type="InParanoid" id="A5DYV8"/>
<dbReference type="OMA" id="INMHAAR"/>
<dbReference type="OrthoDB" id="121051at2759"/>
<dbReference type="Proteomes" id="UP000001996">
    <property type="component" value="Unassembled WGS sequence"/>
</dbReference>
<dbReference type="GO" id="GO:0005634">
    <property type="term" value="C:nucleus"/>
    <property type="evidence" value="ECO:0007669"/>
    <property type="project" value="UniProtKB-SubCell"/>
</dbReference>
<dbReference type="GO" id="GO:0005524">
    <property type="term" value="F:ATP binding"/>
    <property type="evidence" value="ECO:0007669"/>
    <property type="project" value="UniProtKB-KW"/>
</dbReference>
<dbReference type="GO" id="GO:0140664">
    <property type="term" value="F:ATP-dependent DNA damage sensor activity"/>
    <property type="evidence" value="ECO:0007669"/>
    <property type="project" value="InterPro"/>
</dbReference>
<dbReference type="GO" id="GO:0030983">
    <property type="term" value="F:mismatched DNA binding"/>
    <property type="evidence" value="ECO:0007669"/>
    <property type="project" value="InterPro"/>
</dbReference>
<dbReference type="GO" id="GO:0006298">
    <property type="term" value="P:mismatch repair"/>
    <property type="evidence" value="ECO:0007669"/>
    <property type="project" value="InterPro"/>
</dbReference>
<dbReference type="GO" id="GO:0006312">
    <property type="term" value="P:mitotic recombination"/>
    <property type="evidence" value="ECO:0007669"/>
    <property type="project" value="TreeGrafter"/>
</dbReference>
<dbReference type="Gene3D" id="1.10.1420.10">
    <property type="match status" value="2"/>
</dbReference>
<dbReference type="Gene3D" id="3.40.1170.10">
    <property type="entry name" value="DNA repair protein MutS, domain I"/>
    <property type="match status" value="1"/>
</dbReference>
<dbReference type="Gene3D" id="3.30.420.110">
    <property type="entry name" value="MutS, connector domain"/>
    <property type="match status" value="1"/>
</dbReference>
<dbReference type="Gene3D" id="3.40.50.300">
    <property type="entry name" value="P-loop containing nucleotide triphosphate hydrolases"/>
    <property type="match status" value="1"/>
</dbReference>
<dbReference type="InterPro" id="IPR007695">
    <property type="entry name" value="DNA_mismatch_repair_MutS-lik_N"/>
</dbReference>
<dbReference type="InterPro" id="IPR017261">
    <property type="entry name" value="DNA_mismatch_repair_MutS/MSH"/>
</dbReference>
<dbReference type="InterPro" id="IPR000432">
    <property type="entry name" value="DNA_mismatch_repair_MutS_C"/>
</dbReference>
<dbReference type="InterPro" id="IPR007696">
    <property type="entry name" value="DNA_mismatch_repair_MutS_core"/>
</dbReference>
<dbReference type="InterPro" id="IPR016151">
    <property type="entry name" value="DNA_mismatch_repair_MutS_N"/>
</dbReference>
<dbReference type="InterPro" id="IPR036187">
    <property type="entry name" value="DNA_mismatch_repair_MutS_sf"/>
</dbReference>
<dbReference type="InterPro" id="IPR007860">
    <property type="entry name" value="DNA_mmatch_repair_MutS_con_dom"/>
</dbReference>
<dbReference type="InterPro" id="IPR045076">
    <property type="entry name" value="MutS"/>
</dbReference>
<dbReference type="InterPro" id="IPR036678">
    <property type="entry name" value="MutS_con_dom_sf"/>
</dbReference>
<dbReference type="InterPro" id="IPR027417">
    <property type="entry name" value="P-loop_NTPase"/>
</dbReference>
<dbReference type="PANTHER" id="PTHR11361:SF122">
    <property type="entry name" value="DNA MISMATCH REPAIR PROTEIN MSH3"/>
    <property type="match status" value="1"/>
</dbReference>
<dbReference type="PANTHER" id="PTHR11361">
    <property type="entry name" value="DNA MISMATCH REPAIR PROTEIN MUTS FAMILY MEMBER"/>
    <property type="match status" value="1"/>
</dbReference>
<dbReference type="Pfam" id="PF01624">
    <property type="entry name" value="MutS_I"/>
    <property type="match status" value="1"/>
</dbReference>
<dbReference type="Pfam" id="PF05188">
    <property type="entry name" value="MutS_II"/>
    <property type="match status" value="1"/>
</dbReference>
<dbReference type="Pfam" id="PF05192">
    <property type="entry name" value="MutS_III"/>
    <property type="match status" value="1"/>
</dbReference>
<dbReference type="Pfam" id="PF00488">
    <property type="entry name" value="MutS_V"/>
    <property type="match status" value="1"/>
</dbReference>
<dbReference type="PIRSF" id="PIRSF037677">
    <property type="entry name" value="DNA_mis_repair_Msh6"/>
    <property type="match status" value="1"/>
</dbReference>
<dbReference type="SMART" id="SM00534">
    <property type="entry name" value="MUTSac"/>
    <property type="match status" value="1"/>
</dbReference>
<dbReference type="SMART" id="SM00533">
    <property type="entry name" value="MUTSd"/>
    <property type="match status" value="1"/>
</dbReference>
<dbReference type="SUPFAM" id="SSF55271">
    <property type="entry name" value="DNA repair protein MutS, domain I"/>
    <property type="match status" value="1"/>
</dbReference>
<dbReference type="SUPFAM" id="SSF53150">
    <property type="entry name" value="DNA repair protein MutS, domain II"/>
    <property type="match status" value="1"/>
</dbReference>
<dbReference type="SUPFAM" id="SSF48334">
    <property type="entry name" value="DNA repair protein MutS, domain III"/>
    <property type="match status" value="1"/>
</dbReference>
<dbReference type="SUPFAM" id="SSF52540">
    <property type="entry name" value="P-loop containing nucleoside triphosphate hydrolases"/>
    <property type="match status" value="1"/>
</dbReference>
<dbReference type="PROSITE" id="PS00486">
    <property type="entry name" value="DNA_MISMATCH_REPAIR_2"/>
    <property type="match status" value="1"/>
</dbReference>
<organism>
    <name type="scientific">Lodderomyces elongisporus (strain ATCC 11503 / CBS 2605 / JCM 1781 / NBRC 1676 / NRRL YB-4239)</name>
    <name type="common">Yeast</name>
    <name type="synonym">Saccharomyces elongisporus</name>
    <dbReference type="NCBI Taxonomy" id="379508"/>
    <lineage>
        <taxon>Eukaryota</taxon>
        <taxon>Fungi</taxon>
        <taxon>Dikarya</taxon>
        <taxon>Ascomycota</taxon>
        <taxon>Saccharomycotina</taxon>
        <taxon>Pichiomycetes</taxon>
        <taxon>Debaryomycetaceae</taxon>
        <taxon>Candida/Lodderomyces clade</taxon>
        <taxon>Lodderomyces</taxon>
    </lineage>
</organism>
<accession>A5DYV8</accession>
<reference key="1">
    <citation type="journal article" date="2009" name="Nature">
        <title>Evolution of pathogenicity and sexual reproduction in eight Candida genomes.</title>
        <authorList>
            <person name="Butler G."/>
            <person name="Rasmussen M.D."/>
            <person name="Lin M.F."/>
            <person name="Santos M.A.S."/>
            <person name="Sakthikumar S."/>
            <person name="Munro C.A."/>
            <person name="Rheinbay E."/>
            <person name="Grabherr M."/>
            <person name="Forche A."/>
            <person name="Reedy J.L."/>
            <person name="Agrafioti I."/>
            <person name="Arnaud M.B."/>
            <person name="Bates S."/>
            <person name="Brown A.J.P."/>
            <person name="Brunke S."/>
            <person name="Costanzo M.C."/>
            <person name="Fitzpatrick D.A."/>
            <person name="de Groot P.W.J."/>
            <person name="Harris D."/>
            <person name="Hoyer L.L."/>
            <person name="Hube B."/>
            <person name="Klis F.M."/>
            <person name="Kodira C."/>
            <person name="Lennard N."/>
            <person name="Logue M.E."/>
            <person name="Martin R."/>
            <person name="Neiman A.M."/>
            <person name="Nikolaou E."/>
            <person name="Quail M.A."/>
            <person name="Quinn J."/>
            <person name="Santos M.C."/>
            <person name="Schmitzberger F.F."/>
            <person name="Sherlock G."/>
            <person name="Shah P."/>
            <person name="Silverstein K.A.T."/>
            <person name="Skrzypek M.S."/>
            <person name="Soll D."/>
            <person name="Staggs R."/>
            <person name="Stansfield I."/>
            <person name="Stumpf M.P.H."/>
            <person name="Sudbery P.E."/>
            <person name="Srikantha T."/>
            <person name="Zeng Q."/>
            <person name="Berman J."/>
            <person name="Berriman M."/>
            <person name="Heitman J."/>
            <person name="Gow N.A.R."/>
            <person name="Lorenz M.C."/>
            <person name="Birren B.W."/>
            <person name="Kellis M."/>
            <person name="Cuomo C.A."/>
        </authorList>
    </citation>
    <scope>NUCLEOTIDE SEQUENCE [LARGE SCALE GENOMIC DNA]</scope>
    <source>
        <strain>ATCC 11503 / BCRC 21390 / CBS 2605 / JCM 1781 / NBRC 1676 / NRRL YB-4239</strain>
    </source>
</reference>
<comment type="function">
    <text evidence="1">Component of the post-replicative DNA mismatch repair system (MMR). Heterodimerizes with MSH2 to form MutS beta, which binds to DNA mismatches thereby initiating DNA repair. MSH3 provides substrate-binding and substrate specificity to the complex. When bound, the MutS beta heterodimer bends the DNA helix and shields approximately 20 base pairs. Acts mainly to repair insertion-deletion loops (IDLs) from 2 to 13 nucleotides in size, but can also repair base-base and single insertion-deletion mismatches that occur during replication. After mismatch binding, forms a ternary complex with the MutL alpha heterodimer, which is thought to be responsible for directing the downstream MMR events, including strand discrimination, excision, and resynthesis. ATP binding and hydrolysis play a pivotal role in mismatch repair functions (By similarity).</text>
</comment>
<comment type="subunit">
    <text evidence="1">Heterodimer consisting of MSH2-MSH3 (MutS beta). Forms a ternary complex with MutL alpha (MLH1-PMS1) (By similarity).</text>
</comment>
<comment type="subcellular location">
    <subcellularLocation>
        <location evidence="1">Nucleus</location>
    </subcellularLocation>
</comment>
<comment type="similarity">
    <text evidence="4">Belongs to the DNA mismatch repair MutS family. MSH3 subfamily.</text>
</comment>
<feature type="chain" id="PRO_0000338523" description="DNA mismatch repair protein MSH3">
    <location>
        <begin position="1"/>
        <end position="993"/>
    </location>
</feature>
<feature type="region of interest" description="Disordered" evidence="3">
    <location>
        <begin position="1"/>
        <end position="50"/>
    </location>
</feature>
<feature type="region of interest" description="Mispair-binding domain" evidence="1">
    <location>
        <begin position="93"/>
        <end position="212"/>
    </location>
</feature>
<feature type="region of interest" description="Disordered" evidence="3">
    <location>
        <begin position="290"/>
        <end position="317"/>
    </location>
</feature>
<feature type="compositionally biased region" description="Polar residues" evidence="3">
    <location>
        <begin position="1"/>
        <end position="19"/>
    </location>
</feature>
<feature type="compositionally biased region" description="Polar residues" evidence="3">
    <location>
        <begin position="30"/>
        <end position="50"/>
    </location>
</feature>
<feature type="compositionally biased region" description="Low complexity" evidence="3">
    <location>
        <begin position="292"/>
        <end position="311"/>
    </location>
</feature>
<feature type="binding site" evidence="2">
    <location>
        <begin position="787"/>
        <end position="794"/>
    </location>
    <ligand>
        <name>ATP</name>
        <dbReference type="ChEBI" id="CHEBI:30616"/>
    </ligand>
</feature>
<name>MSH3_LODEL</name>
<keyword id="KW-0067">ATP-binding</keyword>
<keyword id="KW-0227">DNA damage</keyword>
<keyword id="KW-0234">DNA repair</keyword>
<keyword id="KW-0238">DNA-binding</keyword>
<keyword id="KW-0547">Nucleotide-binding</keyword>
<keyword id="KW-0539">Nucleus</keyword>
<keyword id="KW-1185">Reference proteome</keyword>
<protein>
    <recommendedName>
        <fullName>DNA mismatch repair protein MSH3</fullName>
    </recommendedName>
    <alternativeName>
        <fullName>MutS protein homolog 3</fullName>
    </alternativeName>
</protein>
<evidence type="ECO:0000250" key="1"/>
<evidence type="ECO:0000255" key="2"/>
<evidence type="ECO:0000256" key="3">
    <source>
        <dbReference type="SAM" id="MobiDB-lite"/>
    </source>
</evidence>
<evidence type="ECO:0000305" key="4"/>
<gene>
    <name type="primary">MSH3</name>
    <name type="ORF">LELG_02545</name>
</gene>
<sequence>MASKKQSTISLFFSSQTRKSPGRDAKKNDISSSPFNAASSTNNSIGSTPRVSPIAKFQYNKSTSTLHENTNPRVKRVSTLNVDVEKEHKKIKRARSTKLTPLESQILQLLSEHPDKILLIQVGYKYKVYGEDARHVARCLNIMFISSSTDPTFSYCSFPENRLHINLQRILNTGVKVGVVKQMESAIIKEVDKIGKSGDLMKRELTGVYTRGTYMNDEFIDSGVNSPEQEELGYIVCVNEISRYQFAIVAIQPLTGEIIYDDFTDDVSHDELETRLLYLRPSEVLLLGCGGNESNNNNNNNSNNSSNNNDNGTDADAQNQTSTLQCFQKLVNHNIKIERKPKGLNNLKAVLNAAALNFYRELLEPVQVCVSELVKYLEEFNLSNIFTVIENVSKFDSKKTMILPASTMLSLEIFQNSENSTTKGTLFSLLNHTKTPFGMRLLESWVSHPLIDKDKIEERYQAVEDLSTGSHFNDCLSRLLQKIGKNLDLESIAIKIHYSTTTRSLATKINRKDIFMMLLMYQSALQFVSQFEKTIKASNLSPLLKRVLDNLLQLANTDTVDRFMDMINPSYLLGEQQNLHQSSRSTREQKVKFFNLNNGFEEINRELAEIMNVKMLLEEELVKVKKLLQRPQLNYVTSNGEPYLIEVRNGKAVESLPIDFIKINGTTTVSRFRSKEIAHLYKMKQYHEEVLNNRCDEAFNTFLNELDSHYGFFQGITKNLAVLDCLLSLAAVSNSNSNTHVKPNLSDELIIDVKNARHPIIEHLRDGYVANDIDIRYDSNRVLVITGPNMGGKSSYVKMVALLIIMTQIGCYIPCEAATIGIFDSILIRMGASDNLLKGRSTFMTEMLECSNIIQKLTPRSLVILDEIGRGTGSIDGYSLAYAILRYLVESKLKPIVLCITHYTGLLSETEDEKFDKDAKDENLDTGDDVVKSYYMGYEEITQPGQVFPEIVFLYNLCPGVSNSYGLQVAKMAGLPKKVLLEAYLMSSVTDFD</sequence>